<feature type="chain" id="PRO_0000370081" description="3-deoxy-manno-octulosonate cytidylyltransferase">
    <location>
        <begin position="1"/>
        <end position="250"/>
    </location>
</feature>
<evidence type="ECO:0000255" key="1">
    <source>
        <dbReference type="HAMAP-Rule" id="MF_00057"/>
    </source>
</evidence>
<gene>
    <name evidence="1" type="primary">kdsB</name>
    <name type="ordered locus">lpp1894</name>
</gene>
<dbReference type="EC" id="2.7.7.38" evidence="1"/>
<dbReference type="EMBL" id="CR628336">
    <property type="protein sequence ID" value="CAH13046.1"/>
    <property type="molecule type" value="Genomic_DNA"/>
</dbReference>
<dbReference type="RefSeq" id="WP_011214172.1">
    <property type="nucleotide sequence ID" value="NC_006368.1"/>
</dbReference>
<dbReference type="SMR" id="Q5X3Y7"/>
<dbReference type="KEGG" id="lpp:lpp1894"/>
<dbReference type="LegioList" id="lpp1894"/>
<dbReference type="HOGENOM" id="CLU_065038_1_0_6"/>
<dbReference type="UniPathway" id="UPA00030"/>
<dbReference type="UniPathway" id="UPA00358">
    <property type="reaction ID" value="UER00476"/>
</dbReference>
<dbReference type="GO" id="GO:0005829">
    <property type="term" value="C:cytosol"/>
    <property type="evidence" value="ECO:0007669"/>
    <property type="project" value="TreeGrafter"/>
</dbReference>
<dbReference type="GO" id="GO:0008690">
    <property type="term" value="F:3-deoxy-manno-octulosonate cytidylyltransferase activity"/>
    <property type="evidence" value="ECO:0007669"/>
    <property type="project" value="UniProtKB-UniRule"/>
</dbReference>
<dbReference type="GO" id="GO:0033468">
    <property type="term" value="P:CMP-keto-3-deoxy-D-manno-octulosonic acid biosynthetic process"/>
    <property type="evidence" value="ECO:0007669"/>
    <property type="project" value="UniProtKB-UniRule"/>
</dbReference>
<dbReference type="GO" id="GO:0009103">
    <property type="term" value="P:lipopolysaccharide biosynthetic process"/>
    <property type="evidence" value="ECO:0007669"/>
    <property type="project" value="UniProtKB-UniRule"/>
</dbReference>
<dbReference type="CDD" id="cd02517">
    <property type="entry name" value="CMP-KDO-Synthetase"/>
    <property type="match status" value="1"/>
</dbReference>
<dbReference type="FunFam" id="3.90.550.10:FF:000011">
    <property type="entry name" value="3-deoxy-manno-octulosonate cytidylyltransferase"/>
    <property type="match status" value="1"/>
</dbReference>
<dbReference type="Gene3D" id="3.90.550.10">
    <property type="entry name" value="Spore Coat Polysaccharide Biosynthesis Protein SpsA, Chain A"/>
    <property type="match status" value="1"/>
</dbReference>
<dbReference type="HAMAP" id="MF_00057">
    <property type="entry name" value="KdsB"/>
    <property type="match status" value="1"/>
</dbReference>
<dbReference type="InterPro" id="IPR003329">
    <property type="entry name" value="Cytidylyl_trans"/>
</dbReference>
<dbReference type="InterPro" id="IPR004528">
    <property type="entry name" value="KdsB"/>
</dbReference>
<dbReference type="InterPro" id="IPR029044">
    <property type="entry name" value="Nucleotide-diphossugar_trans"/>
</dbReference>
<dbReference type="NCBIfam" id="TIGR00466">
    <property type="entry name" value="kdsB"/>
    <property type="match status" value="1"/>
</dbReference>
<dbReference type="NCBIfam" id="NF003950">
    <property type="entry name" value="PRK05450.1-3"/>
    <property type="match status" value="1"/>
</dbReference>
<dbReference type="NCBIfam" id="NF003952">
    <property type="entry name" value="PRK05450.1-5"/>
    <property type="match status" value="1"/>
</dbReference>
<dbReference type="NCBIfam" id="NF009905">
    <property type="entry name" value="PRK13368.1"/>
    <property type="match status" value="1"/>
</dbReference>
<dbReference type="PANTHER" id="PTHR42866">
    <property type="entry name" value="3-DEOXY-MANNO-OCTULOSONATE CYTIDYLYLTRANSFERASE"/>
    <property type="match status" value="1"/>
</dbReference>
<dbReference type="PANTHER" id="PTHR42866:SF2">
    <property type="entry name" value="3-DEOXY-MANNO-OCTULOSONATE CYTIDYLYLTRANSFERASE, MITOCHONDRIAL"/>
    <property type="match status" value="1"/>
</dbReference>
<dbReference type="Pfam" id="PF02348">
    <property type="entry name" value="CTP_transf_3"/>
    <property type="match status" value="1"/>
</dbReference>
<dbReference type="SUPFAM" id="SSF53448">
    <property type="entry name" value="Nucleotide-diphospho-sugar transferases"/>
    <property type="match status" value="1"/>
</dbReference>
<proteinExistence type="inferred from homology"/>
<reference key="1">
    <citation type="journal article" date="2004" name="Nat. Genet.">
        <title>Evidence in the Legionella pneumophila genome for exploitation of host cell functions and high genome plasticity.</title>
        <authorList>
            <person name="Cazalet C."/>
            <person name="Rusniok C."/>
            <person name="Brueggemann H."/>
            <person name="Zidane N."/>
            <person name="Magnier A."/>
            <person name="Ma L."/>
            <person name="Tichit M."/>
            <person name="Jarraud S."/>
            <person name="Bouchier C."/>
            <person name="Vandenesch F."/>
            <person name="Kunst F."/>
            <person name="Etienne J."/>
            <person name="Glaser P."/>
            <person name="Buchrieser C."/>
        </authorList>
    </citation>
    <scope>NUCLEOTIDE SEQUENCE [LARGE SCALE GENOMIC DNA]</scope>
    <source>
        <strain>Paris</strain>
    </source>
</reference>
<comment type="function">
    <text evidence="1">Activates KDO (a required 8-carbon sugar) for incorporation into bacterial lipopolysaccharide in Gram-negative bacteria.</text>
</comment>
<comment type="catalytic activity">
    <reaction evidence="1">
        <text>3-deoxy-alpha-D-manno-oct-2-ulosonate + CTP = CMP-3-deoxy-beta-D-manno-octulosonate + diphosphate</text>
        <dbReference type="Rhea" id="RHEA:23448"/>
        <dbReference type="ChEBI" id="CHEBI:33019"/>
        <dbReference type="ChEBI" id="CHEBI:37563"/>
        <dbReference type="ChEBI" id="CHEBI:85986"/>
        <dbReference type="ChEBI" id="CHEBI:85987"/>
        <dbReference type="EC" id="2.7.7.38"/>
    </reaction>
</comment>
<comment type="pathway">
    <text evidence="1">Nucleotide-sugar biosynthesis; CMP-3-deoxy-D-manno-octulosonate biosynthesis; CMP-3-deoxy-D-manno-octulosonate from 3-deoxy-D-manno-octulosonate and CTP: step 1/1.</text>
</comment>
<comment type="pathway">
    <text evidence="1">Bacterial outer membrane biogenesis; lipopolysaccharide biosynthesis.</text>
</comment>
<comment type="subcellular location">
    <subcellularLocation>
        <location evidence="1">Cytoplasm</location>
    </subcellularLocation>
</comment>
<comment type="similarity">
    <text evidence="1">Belongs to the KdsB family.</text>
</comment>
<keyword id="KW-0963">Cytoplasm</keyword>
<keyword id="KW-0448">Lipopolysaccharide biosynthesis</keyword>
<keyword id="KW-0548">Nucleotidyltransferase</keyword>
<keyword id="KW-0808">Transferase</keyword>
<name>KDSB_LEGPA</name>
<sequence length="250" mass="28306">MSHNFHVIIPARYHSSRFPGKLLQEINGITVIERVYRQALLAEPKSVIIATDHDEIADRAIQFGAEVVITSHTHQTGTDRIAEVVAKGSFAPDDVIVNVQGDEPFIRPKLIQQVACSLTKTKAPVSTLCWPISSLQILNNPNVVKVVCTRDNHALYFSRSAIPFHRDDKNAYSNTFRHIGLYAYRAAFLLEFVSWPPCALEQIECLEQLRILWSGFSIRVDEACEEPLQDINTKEDLILAQQYFLDTFNV</sequence>
<protein>
    <recommendedName>
        <fullName evidence="1">3-deoxy-manno-octulosonate cytidylyltransferase</fullName>
        <ecNumber evidence="1">2.7.7.38</ecNumber>
    </recommendedName>
    <alternativeName>
        <fullName evidence="1">CMP-2-keto-3-deoxyoctulosonic acid synthase</fullName>
        <shortName evidence="1">CKS</shortName>
        <shortName evidence="1">CMP-KDO synthase</shortName>
    </alternativeName>
</protein>
<organism>
    <name type="scientific">Legionella pneumophila (strain Paris)</name>
    <dbReference type="NCBI Taxonomy" id="297246"/>
    <lineage>
        <taxon>Bacteria</taxon>
        <taxon>Pseudomonadati</taxon>
        <taxon>Pseudomonadota</taxon>
        <taxon>Gammaproteobacteria</taxon>
        <taxon>Legionellales</taxon>
        <taxon>Legionellaceae</taxon>
        <taxon>Legionella</taxon>
    </lineage>
</organism>
<accession>Q5X3Y7</accession>